<name>H33A_DICDI</name>
<sequence>MARTKQTARKSTGAKVPRKHIGSKQAHKQTPVSSSSGGVKKVHRFRPGTVALREIRKYQKSTDLLIRKLPFQRLVREIAQEFKTDLRFQSAAIGALQEASEAYLVGLFEDTNLCAIHAKRVTIMPKDIHLARRIRGERS</sequence>
<gene>
    <name type="primary">H3a</name>
    <name type="synonym">DdH3</name>
    <name type="ORF">DDB_G0267402</name>
</gene>
<accession>O15819</accession>
<accession>Q55FF6</accession>
<reference key="1">
    <citation type="journal article" date="1997" name="Biochim. Biophys. Acta">
        <title>Molecular cloning of a cDNA encoding the nucleosome core histone H3 from Dictyostelium discoideum by genetic screening in yeast.</title>
        <authorList>
            <person name="Bukenberger M."/>
            <person name="Horn J."/>
            <person name="Dingermann T."/>
            <person name="Dottin R.P."/>
            <person name="Winckler T."/>
        </authorList>
    </citation>
    <scope>NUCLEOTIDE SEQUENCE [MRNA]</scope>
    <source>
        <strain>AX3</strain>
    </source>
</reference>
<reference key="2">
    <citation type="journal article" date="2005" name="Nature">
        <title>The genome of the social amoeba Dictyostelium discoideum.</title>
        <authorList>
            <person name="Eichinger L."/>
            <person name="Pachebat J.A."/>
            <person name="Gloeckner G."/>
            <person name="Rajandream M.A."/>
            <person name="Sucgang R."/>
            <person name="Berriman M."/>
            <person name="Song J."/>
            <person name="Olsen R."/>
            <person name="Szafranski K."/>
            <person name="Xu Q."/>
            <person name="Tunggal B."/>
            <person name="Kummerfeld S."/>
            <person name="Madera M."/>
            <person name="Konfortov B.A."/>
            <person name="Rivero F."/>
            <person name="Bankier A.T."/>
            <person name="Lehmann R."/>
            <person name="Hamlin N."/>
            <person name="Davies R."/>
            <person name="Gaudet P."/>
            <person name="Fey P."/>
            <person name="Pilcher K."/>
            <person name="Chen G."/>
            <person name="Saunders D."/>
            <person name="Sodergren E.J."/>
            <person name="Davis P."/>
            <person name="Kerhornou A."/>
            <person name="Nie X."/>
            <person name="Hall N."/>
            <person name="Anjard C."/>
            <person name="Hemphill L."/>
            <person name="Bason N."/>
            <person name="Farbrother P."/>
            <person name="Desany B."/>
            <person name="Just E."/>
            <person name="Morio T."/>
            <person name="Rost R."/>
            <person name="Churcher C.M."/>
            <person name="Cooper J."/>
            <person name="Haydock S."/>
            <person name="van Driessche N."/>
            <person name="Cronin A."/>
            <person name="Goodhead I."/>
            <person name="Muzny D.M."/>
            <person name="Mourier T."/>
            <person name="Pain A."/>
            <person name="Lu M."/>
            <person name="Harper D."/>
            <person name="Lindsay R."/>
            <person name="Hauser H."/>
            <person name="James K.D."/>
            <person name="Quiles M."/>
            <person name="Madan Babu M."/>
            <person name="Saito T."/>
            <person name="Buchrieser C."/>
            <person name="Wardroper A."/>
            <person name="Felder M."/>
            <person name="Thangavelu M."/>
            <person name="Johnson D."/>
            <person name="Knights A."/>
            <person name="Loulseged H."/>
            <person name="Mungall K.L."/>
            <person name="Oliver K."/>
            <person name="Price C."/>
            <person name="Quail M.A."/>
            <person name="Urushihara H."/>
            <person name="Hernandez J."/>
            <person name="Rabbinowitsch E."/>
            <person name="Steffen D."/>
            <person name="Sanders M."/>
            <person name="Ma J."/>
            <person name="Kohara Y."/>
            <person name="Sharp S."/>
            <person name="Simmonds M.N."/>
            <person name="Spiegler S."/>
            <person name="Tivey A."/>
            <person name="Sugano S."/>
            <person name="White B."/>
            <person name="Walker D."/>
            <person name="Woodward J.R."/>
            <person name="Winckler T."/>
            <person name="Tanaka Y."/>
            <person name="Shaulsky G."/>
            <person name="Schleicher M."/>
            <person name="Weinstock G.M."/>
            <person name="Rosenthal A."/>
            <person name="Cox E.C."/>
            <person name="Chisholm R.L."/>
            <person name="Gibbs R.A."/>
            <person name="Loomis W.F."/>
            <person name="Platzer M."/>
            <person name="Kay R.R."/>
            <person name="Williams J.G."/>
            <person name="Dear P.H."/>
            <person name="Noegel A.A."/>
            <person name="Barrell B.G."/>
            <person name="Kuspa A."/>
        </authorList>
    </citation>
    <scope>NUCLEOTIDE SEQUENCE [LARGE SCALE GENOMIC DNA]</scope>
    <source>
        <strain>AX4</strain>
    </source>
</reference>
<reference key="3">
    <citation type="journal article" date="1979" name="Biochemistry">
        <title>Purification and the histones of Dictyostelium discoideum chromatin.</title>
        <authorList>
            <person name="Bakke A.C."/>
            <person name="Bonner J."/>
        </authorList>
    </citation>
    <scope>PARTIAL PROTEIN SEQUENCE</scope>
</reference>
<reference key="4">
    <citation type="journal article" date="2006" name="Dev. Biol.">
        <title>Developmental timing in Dictyostelium is regulated by the Set1 histone methyltransferase.</title>
        <authorList>
            <person name="Chubb J.R."/>
            <person name="Bloomfield G."/>
            <person name="Xu Q."/>
            <person name="Kaller M."/>
            <person name="Ivens A."/>
            <person name="Skelton J."/>
            <person name="Turner B.M."/>
            <person name="Nellen W."/>
            <person name="Shaulsky G."/>
            <person name="Kay R.R."/>
            <person name="Bickmore W.A."/>
            <person name="Singer R.H."/>
        </authorList>
    </citation>
    <scope>FUNCTION</scope>
    <scope>NOMENCLATURE</scope>
    <scope>SUBCELLULAR LOCATION</scope>
    <scope>DEVELOPMENTAL STAGE</scope>
    <scope>METHYLATION AT LYS-5 BY SET1</scope>
</reference>
<reference key="5">
    <citation type="journal article" date="2006" name="Eukaryot. Cell">
        <title>Differential effects of heterochromatin protein 1 isoforms on mitotic chromosome distribution and growth in Dictyostelium discoideum.</title>
        <authorList>
            <person name="Kaller M."/>
            <person name="Euteneuer U."/>
            <person name="Nellen W."/>
        </authorList>
    </citation>
    <scope>METHYLATION AT LYS-10</scope>
    <scope>SUBCELLULAR LOCATION</scope>
</reference>
<reference key="6">
    <citation type="journal article" date="2007" name="Proc. Natl. Acad. Sci. U.S.A.">
        <title>Global transcriptional responses to cisplatin in Dictyostelium discoideum identify potential drug targets.</title>
        <authorList>
            <person name="Van Driessche N."/>
            <person name="Alexander H."/>
            <person name="Min J."/>
            <person name="Kuspa A."/>
            <person name="Alexander S."/>
            <person name="Shaulsky G."/>
        </authorList>
    </citation>
    <scope>IDENTIFICATION</scope>
</reference>
<reference key="7">
    <citation type="journal article" date="2011" name="Biochem. Biophys. Res. Commun.">
        <title>The histone methyltransferase Dot1 is required for DNA damage repair and proper development in Dictyostelium.</title>
        <authorList>
            <person name="Muller-Taubenberger A."/>
            <person name="Bonisch C."/>
            <person name="Furbringer M."/>
            <person name="Wittek F."/>
            <person name="Hake S.B."/>
        </authorList>
    </citation>
    <scope>METHYLATION AT LYS-83</scope>
    <scope>SUBCELLULAR LOCATION</scope>
    <scope>DEVELOPMENTAL STAGE</scope>
    <source>
        <strain>AX2</strain>
    </source>
</reference>
<feature type="initiator methionine" description="Removed" evidence="1">
    <location>
        <position position="1"/>
    </location>
</feature>
<feature type="chain" id="PRO_0000379482" description="Histone H3.3 type a">
    <location>
        <begin position="2"/>
        <end position="139"/>
    </location>
</feature>
<feature type="region of interest" description="Disordered" evidence="2">
    <location>
        <begin position="1"/>
        <end position="43"/>
    </location>
</feature>
<feature type="compositionally biased region" description="Basic residues" evidence="2">
    <location>
        <begin position="16"/>
        <end position="27"/>
    </location>
</feature>
<feature type="modified residue" description="N6,N6,N6-trimethyllysine; by set1; alternate" evidence="3">
    <location>
        <position position="5"/>
    </location>
</feature>
<feature type="modified residue" description="N6,N6-dimethyllysine; by set1; alternate" evidence="3">
    <location>
        <position position="5"/>
    </location>
</feature>
<feature type="modified residue" description="N6-acetyllysine; alternate" evidence="1">
    <location>
        <position position="5"/>
    </location>
</feature>
<feature type="modified residue" description="N6-methyllysine; by set1; alternate" evidence="3">
    <location>
        <position position="5"/>
    </location>
</feature>
<feature type="modified residue" description="N6,N6,N6-trimethyllysine; alternate" evidence="1">
    <location>
        <position position="10"/>
    </location>
</feature>
<feature type="modified residue" description="N6,N6-dimethyllysine; alternate" evidence="4">
    <location>
        <position position="10"/>
    </location>
</feature>
<feature type="modified residue" description="N6-acetyllysine; alternate" evidence="1">
    <location>
        <position position="10"/>
    </location>
</feature>
<feature type="modified residue" description="N6-methyllysine; alternate" evidence="1">
    <location>
        <position position="10"/>
    </location>
</feature>
<feature type="modified residue" description="Phosphoserine" evidence="1">
    <location>
        <position position="11"/>
    </location>
</feature>
<feature type="modified residue" description="N6-acetyllysine" evidence="1">
    <location>
        <position position="15"/>
    </location>
</feature>
<feature type="modified residue" description="N6-acetyllysine; alternate" evidence="1">
    <location>
        <position position="19"/>
    </location>
</feature>
<feature type="modified residue" description="N6-methyllysine; alternate" evidence="1">
    <location>
        <position position="19"/>
    </location>
</feature>
<feature type="modified residue" description="N6-acetyllysine; alternate" evidence="1">
    <location>
        <position position="24"/>
    </location>
</feature>
<feature type="modified residue" description="N6-methyllysine; alternate" evidence="1">
    <location>
        <position position="24"/>
    </location>
</feature>
<feature type="modified residue" description="N6,N6,N6-trimethyllysine; alternate" evidence="1">
    <location>
        <position position="28"/>
    </location>
</feature>
<feature type="modified residue" description="N6,N6-dimethyllysine; alternate" evidence="1">
    <location>
        <position position="28"/>
    </location>
</feature>
<feature type="modified residue" description="N6-acetyllysine; alternate" evidence="1">
    <location>
        <position position="28"/>
    </location>
</feature>
<feature type="modified residue" description="N6-methyllysine; alternate" evidence="1">
    <location>
        <position position="28"/>
    </location>
</feature>
<feature type="modified residue" description="N6,N6,N6-trimethyllysine; alternate" evidence="1">
    <location>
        <position position="40"/>
    </location>
</feature>
<feature type="modified residue" description="N6,N6-dimethyllysine; alternate" evidence="1">
    <location>
        <position position="40"/>
    </location>
</feature>
<feature type="modified residue" description="N6-acetyllysine; alternate" evidence="1">
    <location>
        <position position="40"/>
    </location>
</feature>
<feature type="modified residue" description="N6-methyllysine; alternate" evidence="1">
    <location>
        <position position="40"/>
    </location>
</feature>
<feature type="modified residue" description="N6-acetyllysine" evidence="1">
    <location>
        <position position="60"/>
    </location>
</feature>
<feature type="modified residue" description="N6,N6,N6-trimethyllysine; alternate" evidence="1">
    <location>
        <position position="83"/>
    </location>
</feature>
<feature type="modified residue" description="N6,N6-dimethyllysine; alternate" evidence="5">
    <location>
        <position position="83"/>
    </location>
</feature>
<feature type="modified residue" description="N6-methyllysine; alternate" evidence="1">
    <location>
        <position position="83"/>
    </location>
</feature>
<evidence type="ECO:0000250" key="1"/>
<evidence type="ECO:0000256" key="2">
    <source>
        <dbReference type="SAM" id="MobiDB-lite"/>
    </source>
</evidence>
<evidence type="ECO:0000269" key="3">
    <source>
    </source>
</evidence>
<evidence type="ECO:0000269" key="4">
    <source>
    </source>
</evidence>
<evidence type="ECO:0000269" key="5">
    <source>
    </source>
</evidence>
<evidence type="ECO:0000305" key="6"/>
<proteinExistence type="evidence at protein level"/>
<comment type="function">
    <text evidence="3">Core component of nucleosome. Nucleosomes wrap and compact DNA into chromatin, limiting DNA accessibility to the cellular machineries which require DNA as a template. Histones thereby play a central role in transcription regulation, DNA repair, DNA replication and chromosomal stability. DNA accessibility is regulated via a complex set of post-translational modifications of histones, also called histone code, and nucleosome remodeling.</text>
</comment>
<comment type="subunit">
    <text evidence="1">The nucleosome is a histone octamer containing two molecules each of H2A, H2B, H3 and H4 assembled in one H3-H4 heterotetramer and two H2A-H2B heterodimers. The octamer wraps approximately 147 bp of DNA (By similarity).</text>
</comment>
<comment type="subcellular location">
    <subcellularLocation>
        <location>Nucleus</location>
    </subcellularLocation>
    <subcellularLocation>
        <location>Chromosome</location>
    </subcellularLocation>
    <text>Associated with pericentromeric heterochromatin.</text>
</comment>
<comment type="developmental stage">
    <text evidence="3 5">Levels relative to total cellular protein, increase as differentiation proceeds towards the final culminant. The levels of tri-methylation of Lys-5 (H3K4me3) diminish considerably during the process of differentiation. In contrast, the level of mono-methylation of Lys-5 (H3K4me1) becomes significantly enhanced during differentiation. There is a slight dip in di-methylation of Lys-5 (H3K4me2) around the time of aggregation and the level of this mark again dips during the final stages of spore formation. The levels of H3K4me1 and H3K4me2 rise during the inactivation of rasG that occurs after the onset of differentiation. The level of dimethylation at this locus peaks coinciding with the loss of H3K4me3. This enrichment of dimethyl H3K4 declines as the rise in the level of H3K4me1 continues. H3K79me2 (di-methylation of Lys-83) is expressed during the whole life cycle.</text>
</comment>
<comment type="PTM">
    <text evidence="1">Acetylation is generally linked to gene activation.</text>
</comment>
<comment type="PTM">
    <text evidence="1">Different methylation states of H3K4 mark distinct developmental phases. H3K4me2 is associated with euchromatic regions. H3K4me3 is a mark of active chromatin. set1 is responsible for all mono-, di- and tri-methylation of H3K4. H3K4me facilitates subsequent acetylation of H3 and H4. Methylation at H3K9 and H3K27 are linked to gene repression (By similarity).</text>
</comment>
<comment type="PTM">
    <text evidence="1">H3S10ph, which is linked to gene activation, prevents methylation at H3K9 but facilitates acetylation of H3 and H4.</text>
</comment>
<comment type="similarity">
    <text evidence="6">Belongs to the histone H3 family.</text>
</comment>
<comment type="caution">
    <text evidence="6">To ensure consistency between histone entries, we follow the 'Brno' nomenclature for histone modifications, with positions referring to those used in the literature for the 'closest' model organism. Due to slight variations in histone sequences between organisms and to the presence of initiator methionine in UniProtKB/Swiss-Prot sequences, the actual positions of modified amino acids in the sequence generally differ. In this entry the following conventions are used: H3K4me1/2/3 = mono-, di- and trimethylated Lys-5; H3K9ac = acetylated Lys-10; H3K9me1 = monomethylated Lys-10; H3S10ph = phosphorylated Ser-11; H3K14ac = acetylated Lys-15; H3K14me2 = dimethylated Lys-15; H3K18ac = acetylated Lys-19; H3K18me1 = monomethylated Lys-19; H3K23ac = acetylated Lys-24; H3K23me1 = monomethylated Lys-24; H3K27ac = acetylated Lys-28; H3K27me1/2/3 = mono-, di- and trimethylated Lys-28; H3K36ac = acetylated Lys-40; H3K36me1/2/3 = mono-, di- and trimethylated Lys-40; H3K56ac = acetylated Lys-60; H3K64ac = acetylated Lys-68; H3K79me1/2/3 = mono-, di- and trimethylated Lys-83.</text>
</comment>
<keyword id="KW-0007">Acetylation</keyword>
<keyword id="KW-0158">Chromosome</keyword>
<keyword id="KW-0903">Direct protein sequencing</keyword>
<keyword id="KW-0238">DNA-binding</keyword>
<keyword id="KW-0488">Methylation</keyword>
<keyword id="KW-0544">Nucleosome core</keyword>
<keyword id="KW-0539">Nucleus</keyword>
<keyword id="KW-0597">Phosphoprotein</keyword>
<keyword id="KW-1185">Reference proteome</keyword>
<protein>
    <recommendedName>
        <fullName>Histone H3.3 type a</fullName>
    </recommendedName>
    <alternativeName>
        <fullName>Histone 3, variant 3 type a</fullName>
    </alternativeName>
</protein>
<dbReference type="EMBL" id="U76664">
    <property type="protein sequence ID" value="AAB63013.1"/>
    <property type="molecule type" value="mRNA"/>
</dbReference>
<dbReference type="EMBL" id="AAFI02000003">
    <property type="protein sequence ID" value="EAL73153.1"/>
    <property type="molecule type" value="Genomic_DNA"/>
</dbReference>
<dbReference type="RefSeq" id="XP_647577.1">
    <property type="nucleotide sequence ID" value="XM_642485.1"/>
</dbReference>
<dbReference type="SMR" id="O15819"/>
<dbReference type="FunCoup" id="O15819">
    <property type="interactions" value="635"/>
</dbReference>
<dbReference type="STRING" id="44689.O15819"/>
<dbReference type="iPTMnet" id="O15819"/>
<dbReference type="PaxDb" id="44689-DDB0191157"/>
<dbReference type="EnsemblProtists" id="EAL73153">
    <property type="protein sequence ID" value="EAL73153"/>
    <property type="gene ID" value="DDB_G0267402"/>
</dbReference>
<dbReference type="GeneID" id="8616389"/>
<dbReference type="KEGG" id="ddi:DDB_G0267402"/>
<dbReference type="dictyBase" id="DDB_G0267402">
    <property type="gene designation" value="H3a"/>
</dbReference>
<dbReference type="VEuPathDB" id="AmoebaDB:DDB_G0267402"/>
<dbReference type="eggNOG" id="KOG1745">
    <property type="taxonomic scope" value="Eukaryota"/>
</dbReference>
<dbReference type="HOGENOM" id="CLU_078295_4_0_1"/>
<dbReference type="InParanoid" id="O15819"/>
<dbReference type="OMA" id="ANDCAIH"/>
<dbReference type="PhylomeDB" id="O15819"/>
<dbReference type="Reactome" id="R-DDI-1266695">
    <property type="pathway name" value="Interleukin-7 signaling"/>
</dbReference>
<dbReference type="Reactome" id="R-DDI-2299718">
    <property type="pathway name" value="Condensation of Prophase Chromosomes"/>
</dbReference>
<dbReference type="Reactome" id="R-DDI-2559580">
    <property type="pathway name" value="Oxidative Stress Induced Senescence"/>
</dbReference>
<dbReference type="Reactome" id="R-DDI-3214815">
    <property type="pathway name" value="HDACs deacetylate histones"/>
</dbReference>
<dbReference type="Reactome" id="R-DDI-3214841">
    <property type="pathway name" value="PKMTs methylate histone lysines"/>
</dbReference>
<dbReference type="Reactome" id="R-DDI-3214842">
    <property type="pathway name" value="HDMs demethylate histones"/>
</dbReference>
<dbReference type="Reactome" id="R-DDI-3214847">
    <property type="pathway name" value="HATs acetylate histones"/>
</dbReference>
<dbReference type="Reactome" id="R-DDI-3214858">
    <property type="pathway name" value="RMTs methylate histone arginines"/>
</dbReference>
<dbReference type="Reactome" id="R-DDI-3247509">
    <property type="pathway name" value="Chromatin modifying enzymes"/>
</dbReference>
<dbReference type="Reactome" id="R-DDI-427359">
    <property type="pathway name" value="SIRT1 negatively regulates rRNA expression"/>
</dbReference>
<dbReference type="Reactome" id="R-DDI-5625886">
    <property type="pathway name" value="Activated PKN1 stimulates transcription of AR (androgen receptor) regulated genes KLK2 and KLK3"/>
</dbReference>
<dbReference type="Reactome" id="R-DDI-5693565">
    <property type="pathway name" value="Recruitment and ATM-mediated phosphorylation of repair and signaling proteins at DNA double strand breaks"/>
</dbReference>
<dbReference type="Reactome" id="R-DDI-68616">
    <property type="pathway name" value="Assembly of the ORC complex at the origin of replication"/>
</dbReference>
<dbReference type="Reactome" id="R-DDI-73772">
    <property type="pathway name" value="RNA Polymerase I Promoter Escape"/>
</dbReference>
<dbReference type="Reactome" id="R-DDI-983231">
    <property type="pathway name" value="Factors involved in megakaryocyte development and platelet production"/>
</dbReference>
<dbReference type="Reactome" id="R-DDI-9843940">
    <property type="pathway name" value="Regulation of endogenous retroelements by KRAB-ZFP proteins"/>
</dbReference>
<dbReference type="PRO" id="PR:O15819"/>
<dbReference type="Proteomes" id="UP000002195">
    <property type="component" value="Chromosome 1"/>
</dbReference>
<dbReference type="GO" id="GO:0030874">
    <property type="term" value="C:nucleolar chromatin"/>
    <property type="evidence" value="ECO:0000314"/>
    <property type="project" value="dictyBase"/>
</dbReference>
<dbReference type="GO" id="GO:0000786">
    <property type="term" value="C:nucleosome"/>
    <property type="evidence" value="ECO:0007669"/>
    <property type="project" value="UniProtKB-KW"/>
</dbReference>
<dbReference type="GO" id="GO:0005634">
    <property type="term" value="C:nucleus"/>
    <property type="evidence" value="ECO:0000318"/>
    <property type="project" value="GO_Central"/>
</dbReference>
<dbReference type="GO" id="GO:0003677">
    <property type="term" value="F:DNA binding"/>
    <property type="evidence" value="ECO:0007669"/>
    <property type="project" value="UniProtKB-KW"/>
</dbReference>
<dbReference type="GO" id="GO:0046982">
    <property type="term" value="F:protein heterodimerization activity"/>
    <property type="evidence" value="ECO:0007669"/>
    <property type="project" value="InterPro"/>
</dbReference>
<dbReference type="GO" id="GO:0030527">
    <property type="term" value="F:structural constituent of chromatin"/>
    <property type="evidence" value="ECO:0000314"/>
    <property type="project" value="dictyBase"/>
</dbReference>
<dbReference type="GO" id="GO:0006338">
    <property type="term" value="P:chromatin remodeling"/>
    <property type="evidence" value="ECO:0000314"/>
    <property type="project" value="dictyBase"/>
</dbReference>
<dbReference type="GO" id="GO:0040029">
    <property type="term" value="P:epigenetic regulation of gene expression"/>
    <property type="evidence" value="ECO:0000314"/>
    <property type="project" value="dictyBase"/>
</dbReference>
<dbReference type="GO" id="GO:0046689">
    <property type="term" value="P:response to mercury ion"/>
    <property type="evidence" value="ECO:0000314"/>
    <property type="project" value="dictyBase"/>
</dbReference>
<dbReference type="CDD" id="cd22911">
    <property type="entry name" value="HFD_H3"/>
    <property type="match status" value="1"/>
</dbReference>
<dbReference type="FunFam" id="1.10.20.10:FF:000024">
    <property type="entry name" value="Histone H3"/>
    <property type="match status" value="1"/>
</dbReference>
<dbReference type="Gene3D" id="1.10.20.10">
    <property type="entry name" value="Histone, subunit A"/>
    <property type="match status" value="1"/>
</dbReference>
<dbReference type="InterPro" id="IPR009072">
    <property type="entry name" value="Histone-fold"/>
</dbReference>
<dbReference type="InterPro" id="IPR007125">
    <property type="entry name" value="Histone_H2A/H2B/H3"/>
</dbReference>
<dbReference type="InterPro" id="IPR000164">
    <property type="entry name" value="Histone_H3/CENP-A"/>
</dbReference>
<dbReference type="PANTHER" id="PTHR11426">
    <property type="entry name" value="HISTONE H3"/>
    <property type="match status" value="1"/>
</dbReference>
<dbReference type="Pfam" id="PF00125">
    <property type="entry name" value="Histone"/>
    <property type="match status" value="1"/>
</dbReference>
<dbReference type="PRINTS" id="PR00622">
    <property type="entry name" value="HISTONEH3"/>
</dbReference>
<dbReference type="SMART" id="SM00428">
    <property type="entry name" value="H3"/>
    <property type="match status" value="1"/>
</dbReference>
<dbReference type="SUPFAM" id="SSF47113">
    <property type="entry name" value="Histone-fold"/>
    <property type="match status" value="1"/>
</dbReference>
<dbReference type="PROSITE" id="PS00959">
    <property type="entry name" value="HISTONE_H3_2"/>
    <property type="match status" value="1"/>
</dbReference>
<organism>
    <name type="scientific">Dictyostelium discoideum</name>
    <name type="common">Social amoeba</name>
    <dbReference type="NCBI Taxonomy" id="44689"/>
    <lineage>
        <taxon>Eukaryota</taxon>
        <taxon>Amoebozoa</taxon>
        <taxon>Evosea</taxon>
        <taxon>Eumycetozoa</taxon>
        <taxon>Dictyostelia</taxon>
        <taxon>Dictyosteliales</taxon>
        <taxon>Dictyosteliaceae</taxon>
        <taxon>Dictyostelium</taxon>
    </lineage>
</organism>